<accession>A5ELP1</accession>
<protein>
    <recommendedName>
        <fullName evidence="1">Large ribosomal subunit protein uL1</fullName>
    </recommendedName>
    <alternativeName>
        <fullName evidence="2">50S ribosomal protein L1</fullName>
    </alternativeName>
</protein>
<keyword id="KW-1185">Reference proteome</keyword>
<keyword id="KW-0678">Repressor</keyword>
<keyword id="KW-0687">Ribonucleoprotein</keyword>
<keyword id="KW-0689">Ribosomal protein</keyword>
<keyword id="KW-0694">RNA-binding</keyword>
<keyword id="KW-0699">rRNA-binding</keyword>
<keyword id="KW-0810">Translation regulation</keyword>
<keyword id="KW-0820">tRNA-binding</keyword>
<organism>
    <name type="scientific">Bradyrhizobium sp. (strain BTAi1 / ATCC BAA-1182)</name>
    <dbReference type="NCBI Taxonomy" id="288000"/>
    <lineage>
        <taxon>Bacteria</taxon>
        <taxon>Pseudomonadati</taxon>
        <taxon>Pseudomonadota</taxon>
        <taxon>Alphaproteobacteria</taxon>
        <taxon>Hyphomicrobiales</taxon>
        <taxon>Nitrobacteraceae</taxon>
        <taxon>Bradyrhizobium</taxon>
    </lineage>
</organism>
<proteinExistence type="inferred from homology"/>
<sequence>MAIGKRLKKAREGIDRTKLYPLADAIKMIKERAVSKFDETIEVAINLGVDPRHADQMVRGVVMLPNGTGRTLRVGVFARGAKAEEAKAAGADVVGAEDLVEKVQNGNIDFDRCIATPDMMPLVGRLGKVLGPRGMMPNPKIGTVTMDVAGAVKGAKGGSVEFRVEKAGIIQAGVGKASFAEDKLVENIKALADAVVKAKPAGAKGTYVQRVAVSSTMGPGVKVEPGTVLA</sequence>
<reference key="1">
    <citation type="journal article" date="2007" name="Science">
        <title>Legumes symbioses: absence of nod genes in photosynthetic bradyrhizobia.</title>
        <authorList>
            <person name="Giraud E."/>
            <person name="Moulin L."/>
            <person name="Vallenet D."/>
            <person name="Barbe V."/>
            <person name="Cytryn E."/>
            <person name="Avarre J.-C."/>
            <person name="Jaubert M."/>
            <person name="Simon D."/>
            <person name="Cartieaux F."/>
            <person name="Prin Y."/>
            <person name="Bena G."/>
            <person name="Hannibal L."/>
            <person name="Fardoux J."/>
            <person name="Kojadinovic M."/>
            <person name="Vuillet L."/>
            <person name="Lajus A."/>
            <person name="Cruveiller S."/>
            <person name="Rouy Z."/>
            <person name="Mangenot S."/>
            <person name="Segurens B."/>
            <person name="Dossat C."/>
            <person name="Franck W.L."/>
            <person name="Chang W.-S."/>
            <person name="Saunders E."/>
            <person name="Bruce D."/>
            <person name="Richardson P."/>
            <person name="Normand P."/>
            <person name="Dreyfus B."/>
            <person name="Pignol D."/>
            <person name="Stacey G."/>
            <person name="Emerich D."/>
            <person name="Vermeglio A."/>
            <person name="Medigue C."/>
            <person name="Sadowsky M."/>
        </authorList>
    </citation>
    <scope>NUCLEOTIDE SEQUENCE [LARGE SCALE GENOMIC DNA]</scope>
    <source>
        <strain>BTAi1 / ATCC BAA-1182</strain>
    </source>
</reference>
<comment type="function">
    <text evidence="1">Binds directly to 23S rRNA. The L1 stalk is quite mobile in the ribosome, and is involved in E site tRNA release.</text>
</comment>
<comment type="function">
    <text evidence="1">Protein L1 is also a translational repressor protein, it controls the translation of the L11 operon by binding to its mRNA.</text>
</comment>
<comment type="subunit">
    <text evidence="1">Part of the 50S ribosomal subunit.</text>
</comment>
<comment type="similarity">
    <text evidence="1">Belongs to the universal ribosomal protein uL1 family.</text>
</comment>
<name>RL1_BRASB</name>
<feature type="chain" id="PRO_0000307967" description="Large ribosomal subunit protein uL1">
    <location>
        <begin position="1"/>
        <end position="230"/>
    </location>
</feature>
<dbReference type="EMBL" id="CP000494">
    <property type="protein sequence ID" value="ABQ37085.1"/>
    <property type="molecule type" value="Genomic_DNA"/>
</dbReference>
<dbReference type="RefSeq" id="WP_012045055.1">
    <property type="nucleotide sequence ID" value="NC_009485.1"/>
</dbReference>
<dbReference type="SMR" id="A5ELP1"/>
<dbReference type="STRING" id="288000.BBta_5086"/>
<dbReference type="KEGG" id="bbt:BBta_5086"/>
<dbReference type="eggNOG" id="COG0081">
    <property type="taxonomic scope" value="Bacteria"/>
</dbReference>
<dbReference type="HOGENOM" id="CLU_062853_0_0_5"/>
<dbReference type="OrthoDB" id="9803740at2"/>
<dbReference type="Proteomes" id="UP000000246">
    <property type="component" value="Chromosome"/>
</dbReference>
<dbReference type="GO" id="GO:0022625">
    <property type="term" value="C:cytosolic large ribosomal subunit"/>
    <property type="evidence" value="ECO:0007669"/>
    <property type="project" value="TreeGrafter"/>
</dbReference>
<dbReference type="GO" id="GO:0019843">
    <property type="term" value="F:rRNA binding"/>
    <property type="evidence" value="ECO:0007669"/>
    <property type="project" value="UniProtKB-UniRule"/>
</dbReference>
<dbReference type="GO" id="GO:0003735">
    <property type="term" value="F:structural constituent of ribosome"/>
    <property type="evidence" value="ECO:0007669"/>
    <property type="project" value="InterPro"/>
</dbReference>
<dbReference type="GO" id="GO:0000049">
    <property type="term" value="F:tRNA binding"/>
    <property type="evidence" value="ECO:0007669"/>
    <property type="project" value="UniProtKB-KW"/>
</dbReference>
<dbReference type="GO" id="GO:0006417">
    <property type="term" value="P:regulation of translation"/>
    <property type="evidence" value="ECO:0007669"/>
    <property type="project" value="UniProtKB-KW"/>
</dbReference>
<dbReference type="GO" id="GO:0006412">
    <property type="term" value="P:translation"/>
    <property type="evidence" value="ECO:0007669"/>
    <property type="project" value="UniProtKB-UniRule"/>
</dbReference>
<dbReference type="CDD" id="cd00403">
    <property type="entry name" value="Ribosomal_L1"/>
    <property type="match status" value="1"/>
</dbReference>
<dbReference type="FunFam" id="3.40.50.790:FF:000001">
    <property type="entry name" value="50S ribosomal protein L1"/>
    <property type="match status" value="1"/>
</dbReference>
<dbReference type="Gene3D" id="3.30.190.20">
    <property type="match status" value="1"/>
</dbReference>
<dbReference type="Gene3D" id="3.40.50.790">
    <property type="match status" value="1"/>
</dbReference>
<dbReference type="HAMAP" id="MF_01318_B">
    <property type="entry name" value="Ribosomal_uL1_B"/>
    <property type="match status" value="1"/>
</dbReference>
<dbReference type="InterPro" id="IPR005878">
    <property type="entry name" value="Ribosom_uL1_bac-type"/>
</dbReference>
<dbReference type="InterPro" id="IPR002143">
    <property type="entry name" value="Ribosomal_uL1"/>
</dbReference>
<dbReference type="InterPro" id="IPR023674">
    <property type="entry name" value="Ribosomal_uL1-like"/>
</dbReference>
<dbReference type="InterPro" id="IPR028364">
    <property type="entry name" value="Ribosomal_uL1/biogenesis"/>
</dbReference>
<dbReference type="InterPro" id="IPR016095">
    <property type="entry name" value="Ribosomal_uL1_3-a/b-sand"/>
</dbReference>
<dbReference type="InterPro" id="IPR023673">
    <property type="entry name" value="Ribosomal_uL1_CS"/>
</dbReference>
<dbReference type="NCBIfam" id="TIGR01169">
    <property type="entry name" value="rplA_bact"/>
    <property type="match status" value="1"/>
</dbReference>
<dbReference type="PANTHER" id="PTHR36427">
    <property type="entry name" value="54S RIBOSOMAL PROTEIN L1, MITOCHONDRIAL"/>
    <property type="match status" value="1"/>
</dbReference>
<dbReference type="PANTHER" id="PTHR36427:SF3">
    <property type="entry name" value="LARGE RIBOSOMAL SUBUNIT PROTEIN UL1M"/>
    <property type="match status" value="1"/>
</dbReference>
<dbReference type="Pfam" id="PF00687">
    <property type="entry name" value="Ribosomal_L1"/>
    <property type="match status" value="1"/>
</dbReference>
<dbReference type="PIRSF" id="PIRSF002155">
    <property type="entry name" value="Ribosomal_L1"/>
    <property type="match status" value="1"/>
</dbReference>
<dbReference type="SUPFAM" id="SSF56808">
    <property type="entry name" value="Ribosomal protein L1"/>
    <property type="match status" value="1"/>
</dbReference>
<dbReference type="PROSITE" id="PS01199">
    <property type="entry name" value="RIBOSOMAL_L1"/>
    <property type="match status" value="1"/>
</dbReference>
<gene>
    <name evidence="1" type="primary">rplA</name>
    <name type="ordered locus">BBta_5086</name>
</gene>
<evidence type="ECO:0000255" key="1">
    <source>
        <dbReference type="HAMAP-Rule" id="MF_01318"/>
    </source>
</evidence>
<evidence type="ECO:0000305" key="2"/>